<reference key="1">
    <citation type="submission" date="2007-07" db="EMBL/GenBank/DDBJ databases">
        <title>Complete genome sequence of Campylobacter jejuni subsp doylei 269.97 isolated from human blood.</title>
        <authorList>
            <person name="Fouts D.E."/>
            <person name="Mongodin E.F."/>
            <person name="Puiu D."/>
            <person name="Sebastian Y."/>
            <person name="Miller W.G."/>
            <person name="Mandrell R.E."/>
            <person name="Lastovica A.J."/>
            <person name="Nelson K.E."/>
        </authorList>
    </citation>
    <scope>NUCLEOTIDE SEQUENCE [LARGE SCALE GENOMIC DNA]</scope>
    <source>
        <strain>ATCC BAA-1458 / RM4099 / 269.97</strain>
    </source>
</reference>
<dbReference type="EC" id="2.9.1.1" evidence="1"/>
<dbReference type="EMBL" id="CP000768">
    <property type="protein sequence ID" value="ABS44336.1"/>
    <property type="molecule type" value="Genomic_DNA"/>
</dbReference>
<dbReference type="SMR" id="A7H1W2"/>
<dbReference type="KEGG" id="cjd:JJD26997_0273"/>
<dbReference type="HOGENOM" id="CLU_038142_1_0_7"/>
<dbReference type="UniPathway" id="UPA00906">
    <property type="reaction ID" value="UER00896"/>
</dbReference>
<dbReference type="Proteomes" id="UP000002302">
    <property type="component" value="Chromosome"/>
</dbReference>
<dbReference type="GO" id="GO:0005737">
    <property type="term" value="C:cytoplasm"/>
    <property type="evidence" value="ECO:0007669"/>
    <property type="project" value="UniProtKB-SubCell"/>
</dbReference>
<dbReference type="GO" id="GO:0004125">
    <property type="term" value="F:L-seryl-tRNA(Sec) selenium transferase activity"/>
    <property type="evidence" value="ECO:0007669"/>
    <property type="project" value="UniProtKB-UniRule"/>
</dbReference>
<dbReference type="GO" id="GO:0001717">
    <property type="term" value="P:conversion of seryl-tRNAsec to selenocys-tRNAsec"/>
    <property type="evidence" value="ECO:0007669"/>
    <property type="project" value="UniProtKB-UniRule"/>
</dbReference>
<dbReference type="GO" id="GO:0001514">
    <property type="term" value="P:selenocysteine incorporation"/>
    <property type="evidence" value="ECO:0007669"/>
    <property type="project" value="UniProtKB-UniRule"/>
</dbReference>
<dbReference type="Gene3D" id="3.90.1150.180">
    <property type="match status" value="1"/>
</dbReference>
<dbReference type="Gene3D" id="3.40.640.10">
    <property type="entry name" value="Type I PLP-dependent aspartate aminotransferase-like (Major domain)"/>
    <property type="match status" value="1"/>
</dbReference>
<dbReference type="HAMAP" id="MF_00423">
    <property type="entry name" value="SelA"/>
    <property type="match status" value="1"/>
</dbReference>
<dbReference type="InterPro" id="IPR015424">
    <property type="entry name" value="PyrdxlP-dep_Trfase"/>
</dbReference>
<dbReference type="InterPro" id="IPR015421">
    <property type="entry name" value="PyrdxlP-dep_Trfase_major"/>
</dbReference>
<dbReference type="InterPro" id="IPR018319">
    <property type="entry name" value="SelA-like"/>
</dbReference>
<dbReference type="InterPro" id="IPR004534">
    <property type="entry name" value="SelA_trans"/>
</dbReference>
<dbReference type="NCBIfam" id="TIGR00474">
    <property type="entry name" value="selA"/>
    <property type="match status" value="1"/>
</dbReference>
<dbReference type="PANTHER" id="PTHR32328">
    <property type="entry name" value="L-SERYL-TRNA(SEC) SELENIUM TRANSFERASE"/>
    <property type="match status" value="1"/>
</dbReference>
<dbReference type="PANTHER" id="PTHR32328:SF0">
    <property type="entry name" value="L-SERYL-TRNA(SEC) SELENIUM TRANSFERASE"/>
    <property type="match status" value="1"/>
</dbReference>
<dbReference type="Pfam" id="PF03841">
    <property type="entry name" value="SelA"/>
    <property type="match status" value="1"/>
</dbReference>
<dbReference type="SUPFAM" id="SSF53383">
    <property type="entry name" value="PLP-dependent transferases"/>
    <property type="match status" value="1"/>
</dbReference>
<gene>
    <name evidence="1" type="primary">selA</name>
    <name type="ordered locus">JJD26997_0273</name>
</gene>
<evidence type="ECO:0000255" key="1">
    <source>
        <dbReference type="HAMAP-Rule" id="MF_00423"/>
    </source>
</evidence>
<feature type="chain" id="PRO_1000050357" description="L-seryl-tRNA(Sec) selenium transferase">
    <location>
        <begin position="1"/>
        <end position="440"/>
    </location>
</feature>
<feature type="modified residue" description="N6-(pyridoxal phosphate)lysine" evidence="1">
    <location>
        <position position="282"/>
    </location>
</feature>
<sequence>MNKFRTFPQINTLIQDESLKSYPFYIKAFFCKKVVAKLKENFSRDEISKDKLLLEIKKEIKTFYRKDLQSVINASGVVIHTNLGRSVIHEELYEACKDIICNYSNVEFDLENGKRGSRYALVLEKLKMLFECEDALVVNNNAAAVFLVLNSLCYDKEVISSRGELVEIGGSFRVPEVIKAAGVKLCEVGTSNKTHLKDYEQAINENTALILKTHKSNFALMGFHSEVNIKDLHELVKEKGLLSYYDLGSGWCENLNEKLIKNEPKIKKLVQECDILSFSGDKLFGSVQAGIILGKKELIGKLKQNQLLRMLRVDKLTLSFLNESLKAYLQKDYEKIITLKLLNDDLSFIEEKALRVQKELKFQTQLKKSKSLVGGGSMPDKSLDTYILTFQGDALKLQTRFRKENIIGRIENDEFVLDFRTIRENELQKLILKINQMENL</sequence>
<protein>
    <recommendedName>
        <fullName evidence="1">L-seryl-tRNA(Sec) selenium transferase</fullName>
        <ecNumber evidence="1">2.9.1.1</ecNumber>
    </recommendedName>
    <alternativeName>
        <fullName evidence="1">Selenocysteine synthase</fullName>
        <shortName evidence="1">Sec synthase</shortName>
    </alternativeName>
    <alternativeName>
        <fullName evidence="1">Selenocysteinyl-tRNA(Sec) synthase</fullName>
    </alternativeName>
</protein>
<keyword id="KW-0963">Cytoplasm</keyword>
<keyword id="KW-0648">Protein biosynthesis</keyword>
<keyword id="KW-0663">Pyridoxal phosphate</keyword>
<keyword id="KW-0711">Selenium</keyword>
<keyword id="KW-0808">Transferase</keyword>
<proteinExistence type="inferred from homology"/>
<comment type="function">
    <text evidence="1">Converts seryl-tRNA(Sec) to selenocysteinyl-tRNA(Sec) required for selenoprotein biosynthesis.</text>
</comment>
<comment type="catalytic activity">
    <reaction evidence="1">
        <text>L-seryl-tRNA(Sec) + selenophosphate + H(+) = L-selenocysteinyl-tRNA(Sec) + phosphate</text>
        <dbReference type="Rhea" id="RHEA:22728"/>
        <dbReference type="Rhea" id="RHEA-COMP:9742"/>
        <dbReference type="Rhea" id="RHEA-COMP:9743"/>
        <dbReference type="ChEBI" id="CHEBI:15378"/>
        <dbReference type="ChEBI" id="CHEBI:16144"/>
        <dbReference type="ChEBI" id="CHEBI:43474"/>
        <dbReference type="ChEBI" id="CHEBI:78533"/>
        <dbReference type="ChEBI" id="CHEBI:78573"/>
        <dbReference type="EC" id="2.9.1.1"/>
    </reaction>
</comment>
<comment type="cofactor">
    <cofactor evidence="1">
        <name>pyridoxal 5'-phosphate</name>
        <dbReference type="ChEBI" id="CHEBI:597326"/>
    </cofactor>
</comment>
<comment type="pathway">
    <text evidence="1">Aminoacyl-tRNA biosynthesis; selenocysteinyl-tRNA(Sec) biosynthesis; selenocysteinyl-tRNA(Sec) from L-seryl-tRNA(Sec) (bacterial route): step 1/1.</text>
</comment>
<comment type="subcellular location">
    <subcellularLocation>
        <location evidence="1">Cytoplasm</location>
    </subcellularLocation>
</comment>
<comment type="similarity">
    <text evidence="1">Belongs to the SelA family.</text>
</comment>
<accession>A7H1W2</accession>
<organism>
    <name type="scientific">Campylobacter jejuni subsp. doylei (strain ATCC BAA-1458 / RM4099 / 269.97)</name>
    <dbReference type="NCBI Taxonomy" id="360109"/>
    <lineage>
        <taxon>Bacteria</taxon>
        <taxon>Pseudomonadati</taxon>
        <taxon>Campylobacterota</taxon>
        <taxon>Epsilonproteobacteria</taxon>
        <taxon>Campylobacterales</taxon>
        <taxon>Campylobacteraceae</taxon>
        <taxon>Campylobacter</taxon>
    </lineage>
</organism>
<name>SELA_CAMJD</name>